<sequence length="368" mass="40733">MMGRNDDAFHPLLHSTPESSVKIPVPLVSVGRESSQSKGNMKTAILIWLTLQNSIHTLLIRYSRAREVDAMFVSTVAVWLTEVIKCFICLFLVAQEETPRRFIHALRTQILEQPYDTLKVCIPAMIYIVQNNLFYVAASHLDAATFMITSQLKIFTAAIFTVIILRRSLNRTQWFALAVLFVGVSLVQLQGTKAKESSGESPFVGFVAVVVACCLSGFAGIYFEKILKGSAPVSLWMRNVQMAVFSIPASFSAIYMQDSKTVNEYGLLYGFDSIVWLTVLWYGVGGLSVAVCIKYADNIAKNFATSVAIILSTIGSIFLFDFIPSFTFLLGASLVIFSIFLYSSHQSMVAALGRLRGEIPSTKEAFCL</sequence>
<keyword id="KW-0333">Golgi apparatus</keyword>
<keyword id="KW-0472">Membrane</keyword>
<keyword id="KW-1185">Reference proteome</keyword>
<keyword id="KW-0762">Sugar transport</keyword>
<keyword id="KW-0812">Transmembrane</keyword>
<keyword id="KW-1133">Transmembrane helix</keyword>
<keyword id="KW-0813">Transport</keyword>
<reference key="1">
    <citation type="journal article" date="1998" name="Science">
        <title>Genome sequence of the nematode C. elegans: a platform for investigating biology.</title>
        <authorList>
            <consortium name="The C. elegans sequencing consortium"/>
        </authorList>
    </citation>
    <scope>NUCLEOTIDE SEQUENCE [LARGE SCALE GENOMIC DNA]</scope>
    <source>
        <strain>Bristol N2</strain>
    </source>
</reference>
<reference key="2">
    <citation type="journal article" date="2004" name="J. Biol. Chem.">
        <title>Loss of srf-3-encoded nucleotide sugar transporter activity in Caenorhabditis elegans alters surface antigenicity and prevents bacterial adherence.</title>
        <authorList>
            <person name="Hoeflich J."/>
            <person name="Berninsone P."/>
            <person name="Goebel C."/>
            <person name="Gravato-Nobre M.J."/>
            <person name="Libby B.J."/>
            <person name="Darby C."/>
            <person name="Politz S.M."/>
            <person name="Hodgkin J."/>
            <person name="Hirschberg C.B."/>
            <person name="Baumeister R."/>
        </authorList>
    </citation>
    <scope>NUCLEOTIDE SEQUENCE [MRNA] OF 41-368</scope>
    <scope>FUNCTION</scope>
    <scope>SUBCELLULAR LOCATION</scope>
    <scope>TISSUE SPECIFICITY</scope>
    <scope>DEVELOPMENTAL STAGE</scope>
    <scope>MUTAGENESIS OF GLY-285</scope>
    <scope>DISRUPTION PHENOTYPE</scope>
</reference>
<reference key="3">
    <citation type="journal article" date="2004" name="J. Biol. Chem.">
        <title>srf-3, a mutant of Caenorhabditis elegans, resistant to bacterial infection and to biofilm binding, is deficient in glycoconjugates.</title>
        <authorList>
            <person name="Cipollo J.F."/>
            <person name="Awad A.M."/>
            <person name="Costello C.E."/>
            <person name="Hirschberg C.B."/>
        </authorList>
    </citation>
    <scope>FUNCTION</scope>
</reference>
<reference key="4">
    <citation type="journal article" date="2007" name="J. Biol. Chem.">
        <title>Functional redundancy between two Caenorhabditis elegans nucleotide sugar transporters with a novel transport mechanism.</title>
        <authorList>
            <person name="Caffaro C.E."/>
            <person name="Hirschberg C.B."/>
            <person name="Berninsone P.M."/>
        </authorList>
    </citation>
    <scope>FUNCTION</scope>
    <scope>MUTAGENESIS OF ARG-100; 130-GLN--LEU-368 AND 276-TRP--LEU-368</scope>
</reference>
<dbReference type="EMBL" id="Z81102">
    <property type="protein sequence ID" value="CAB03205.4"/>
    <property type="molecule type" value="Genomic_DNA"/>
</dbReference>
<dbReference type="EMBL" id="Z82288">
    <property type="protein sequence ID" value="CAB03205.4"/>
    <property type="status" value="JOINED"/>
    <property type="molecule type" value="Genomic_DNA"/>
</dbReference>
<dbReference type="PIR" id="T23676">
    <property type="entry name" value="T23676"/>
</dbReference>
<dbReference type="RefSeq" id="NP_001255676.1">
    <property type="nucleotide sequence ID" value="NM_001268747.3"/>
</dbReference>
<dbReference type="SMR" id="Q93890"/>
<dbReference type="FunCoup" id="Q93890">
    <property type="interactions" value="112"/>
</dbReference>
<dbReference type="STRING" id="6239.M02B1.1a.1"/>
<dbReference type="TCDB" id="2.A.7.12.4">
    <property type="family name" value="the drug/metabolite transporter (dmt) superfamily"/>
</dbReference>
<dbReference type="PaxDb" id="6239-M02B1.1a"/>
<dbReference type="PeptideAtlas" id="Q93890"/>
<dbReference type="EnsemblMetazoa" id="M02B1.1a.1">
    <property type="protein sequence ID" value="M02B1.1a.1"/>
    <property type="gene ID" value="WBGene00005153"/>
</dbReference>
<dbReference type="GeneID" id="187393"/>
<dbReference type="KEGG" id="cel:CELE_M02B1.1"/>
<dbReference type="UCSC" id="M02B1.1">
    <property type="organism name" value="c. elegans"/>
</dbReference>
<dbReference type="AGR" id="WB:WBGene00005153"/>
<dbReference type="CTD" id="187393"/>
<dbReference type="WormBase" id="M02B1.1a">
    <property type="protein sequence ID" value="CE43555"/>
    <property type="gene ID" value="WBGene00005153"/>
    <property type="gene designation" value="srf-3"/>
</dbReference>
<dbReference type="eggNOG" id="KOG2234">
    <property type="taxonomic scope" value="Eukaryota"/>
</dbReference>
<dbReference type="GeneTree" id="ENSGT00950000182827"/>
<dbReference type="InParanoid" id="Q93890"/>
<dbReference type="OMA" id="GNIAKNF"/>
<dbReference type="OrthoDB" id="408493at2759"/>
<dbReference type="PhylomeDB" id="Q93890"/>
<dbReference type="Reactome" id="R-CEL-727802">
    <property type="pathway name" value="Transport of nucleotide sugars"/>
</dbReference>
<dbReference type="PRO" id="PR:Q93890"/>
<dbReference type="Proteomes" id="UP000001940">
    <property type="component" value="Chromosome IV"/>
</dbReference>
<dbReference type="Bgee" id="WBGene00005153">
    <property type="expression patterns" value="Expressed in adult organism and 3 other cell types or tissues"/>
</dbReference>
<dbReference type="ExpressionAtlas" id="Q93890">
    <property type="expression patterns" value="baseline and differential"/>
</dbReference>
<dbReference type="GO" id="GO:0005794">
    <property type="term" value="C:Golgi apparatus"/>
    <property type="evidence" value="ECO:0000305"/>
    <property type="project" value="WormBase"/>
</dbReference>
<dbReference type="GO" id="GO:0000139">
    <property type="term" value="C:Golgi membrane"/>
    <property type="evidence" value="ECO:0000314"/>
    <property type="project" value="UniProtKB"/>
</dbReference>
<dbReference type="GO" id="GO:0048471">
    <property type="term" value="C:perinuclear region of cytoplasm"/>
    <property type="evidence" value="ECO:0000314"/>
    <property type="project" value="WormBase"/>
</dbReference>
<dbReference type="GO" id="GO:0005459">
    <property type="term" value="F:UDP-galactose transmembrane transporter activity"/>
    <property type="evidence" value="ECO:0000314"/>
    <property type="project" value="UniProtKB"/>
</dbReference>
<dbReference type="GO" id="GO:0005462">
    <property type="term" value="F:UDP-N-acetylglucosamine transmembrane transporter activity"/>
    <property type="evidence" value="ECO:0000314"/>
    <property type="project" value="UniProtKB"/>
</dbReference>
<dbReference type="GO" id="GO:0072334">
    <property type="term" value="P:UDP-galactose transmembrane transport"/>
    <property type="evidence" value="ECO:0000314"/>
    <property type="project" value="UniProtKB"/>
</dbReference>
<dbReference type="GO" id="GO:1990569">
    <property type="term" value="P:UDP-N-acetylglucosamine transmembrane transport"/>
    <property type="evidence" value="ECO:0000314"/>
    <property type="project" value="UniProtKB"/>
</dbReference>
<dbReference type="InterPro" id="IPR007271">
    <property type="entry name" value="Nuc_sug_transpt"/>
</dbReference>
<dbReference type="NCBIfam" id="TIGR00803">
    <property type="entry name" value="nst"/>
    <property type="match status" value="1"/>
</dbReference>
<dbReference type="PANTHER" id="PTHR10231">
    <property type="entry name" value="NUCLEOTIDE-SUGAR TRANSMEMBRANE TRANSPORTER"/>
    <property type="match status" value="1"/>
</dbReference>
<dbReference type="Pfam" id="PF04142">
    <property type="entry name" value="Nuc_sug_transp"/>
    <property type="match status" value="1"/>
</dbReference>
<dbReference type="PIRSF" id="PIRSF005799">
    <property type="entry name" value="UDP-gal_transpt"/>
    <property type="match status" value="1"/>
</dbReference>
<dbReference type="SUPFAM" id="SSF103481">
    <property type="entry name" value="Multidrug resistance efflux transporter EmrE"/>
    <property type="match status" value="1"/>
</dbReference>
<gene>
    <name type="primary">srf-3</name>
    <name type="ORF">M02B1.1</name>
</gene>
<evidence type="ECO:0000255" key="1"/>
<evidence type="ECO:0000269" key="2">
    <source>
    </source>
</evidence>
<evidence type="ECO:0000269" key="3">
    <source>
    </source>
</evidence>
<evidence type="ECO:0000269" key="4">
    <source>
    </source>
</evidence>
<evidence type="ECO:0000305" key="5"/>
<accession>Q93890</accession>
<accession>O02348</accession>
<proteinExistence type="evidence at protein level"/>
<organism>
    <name type="scientific">Caenorhabditis elegans</name>
    <dbReference type="NCBI Taxonomy" id="6239"/>
    <lineage>
        <taxon>Eukaryota</taxon>
        <taxon>Metazoa</taxon>
        <taxon>Ecdysozoa</taxon>
        <taxon>Nematoda</taxon>
        <taxon>Chromadorea</taxon>
        <taxon>Rhabditida</taxon>
        <taxon>Rhabditina</taxon>
        <taxon>Rhabditomorpha</taxon>
        <taxon>Rhabditoidea</taxon>
        <taxon>Rhabditidae</taxon>
        <taxon>Peloderinae</taxon>
        <taxon>Caenorhabditis</taxon>
    </lineage>
</organism>
<comment type="function">
    <text evidence="2 3 4">Acts as a transporter of both UDP-galactose and UDP-N-acetylglucosamine into the Golgi lumen (PubMed:15123614, PubMed:15452127). Apparently transports UDP-galactose and UDP-N-acetylglucosamine simultaneously, and independently, by an unknown mechanism (PubMed:17652078). Functions redundantly with nucleotide sugar transporter nstp-4 (PubMed:17652078). May be involved in gonadal development (PubMed:17652078).</text>
</comment>
<comment type="subcellular location">
    <subcellularLocation>
        <location evidence="2">Golgi apparatus membrane</location>
        <topology evidence="2">Multi-pass membrane protein</topology>
    </subcellularLocation>
</comment>
<comment type="tissue specificity">
    <text evidence="2">Expressed exclusively in pharyngeal cells g1 and g2, lateral seam cells, spermatheca and vas deferens.</text>
</comment>
<comment type="developmental stage">
    <text evidence="2">In seam cells, expression is first detected in late embryos, persists to the fourth larval stage and disappears in adults. In glandular cells g1 and g2, expression begins in the first larval stage and remains visible until adulthood.</text>
</comment>
<comment type="disruption phenotype">
    <text evidence="2">Worms display altered surface antigenicity which prevents bacterial adherence. This is due to a deficiency in both O- and N-linked glycans.</text>
</comment>
<comment type="similarity">
    <text evidence="5">Belongs to the nucleotide-sugar transporter family. SLC35A subfamily.</text>
</comment>
<name>SRF3_CAEEL</name>
<protein>
    <recommendedName>
        <fullName>UDP-galactose/UDP-N-acetylglucosamine transporter srf-3</fullName>
    </recommendedName>
    <alternativeName>
        <fullName>Surface antigenicity abnormal 3</fullName>
    </alternativeName>
</protein>
<feature type="chain" id="PRO_0000213363" description="UDP-galactose/UDP-N-acetylglucosamine transporter srf-3">
    <location>
        <begin position="1"/>
        <end position="368"/>
    </location>
</feature>
<feature type="transmembrane region" description="Helical" evidence="1">
    <location>
        <begin position="72"/>
        <end position="92"/>
    </location>
</feature>
<feature type="transmembrane region" description="Helical" evidence="1">
    <location>
        <begin position="118"/>
        <end position="138"/>
    </location>
</feature>
<feature type="transmembrane region" description="Helical" evidence="1">
    <location>
        <begin position="145"/>
        <end position="165"/>
    </location>
</feature>
<feature type="transmembrane region" description="Helical" evidence="1">
    <location>
        <begin position="174"/>
        <end position="194"/>
    </location>
</feature>
<feature type="transmembrane region" description="Helical" evidence="1">
    <location>
        <begin position="203"/>
        <end position="223"/>
    </location>
</feature>
<feature type="transmembrane region" description="Helical" evidence="1">
    <location>
        <begin position="235"/>
        <end position="254"/>
    </location>
</feature>
<feature type="transmembrane region" description="Helical" evidence="1">
    <location>
        <begin position="273"/>
        <end position="293"/>
    </location>
</feature>
<feature type="transmembrane region" description="Helical" evidence="1">
    <location>
        <begin position="317"/>
        <end position="337"/>
    </location>
</feature>
<feature type="mutagenesis site" description="In e2797; no obvious morphological defects, but in combination with RNAi-mediated knockdown of nstp-4, has misshapen gonad arms and accumulation of oocytes." evidence="4">
    <original>R</original>
    <variation>K</variation>
    <location>
        <position position="100"/>
    </location>
</feature>
<feature type="mutagenesis site" description="In e2689; no obvious morphological defects, but in combination with RNAi-mediated knockdown of nstp-4, has misshapen gonad arms and accumulation of oocytes." evidence="4">
    <location>
        <begin position="130"/>
        <end position="368"/>
    </location>
</feature>
<feature type="mutagenesis site" description="In yj10; no obvious morphological defects, but in combination with RNAi-mediated knockdown of nstp-4, has misshapen gonad arms and accumulation of oocytes." evidence="4">
    <location>
        <begin position="276"/>
        <end position="368"/>
    </location>
</feature>
<feature type="mutagenesis site" description="In e2680; resistant to infection by M.nematophilum and prevents biofilm formation by Y.pseudotuberculosis." evidence="2">
    <original>G</original>
    <variation>E</variation>
    <location>
        <position position="285"/>
    </location>
</feature>